<feature type="signal peptide" evidence="2">
    <location>
        <begin position="1"/>
        <end position="22"/>
    </location>
</feature>
<feature type="propeptide" id="PRO_0000401743" evidence="1">
    <location>
        <begin position="23"/>
        <end position="26"/>
    </location>
</feature>
<feature type="chain" id="PRO_0000401744" description="U7-lycotoxin-Ls1a">
    <location>
        <begin position="27"/>
        <end position="78"/>
    </location>
</feature>
<dbReference type="EMBL" id="EU926045">
    <property type="protein sequence ID" value="ACI41377.1"/>
    <property type="molecule type" value="mRNA"/>
</dbReference>
<dbReference type="EMBL" id="FM864049">
    <property type="protein sequence ID" value="CAS03646.1"/>
    <property type="molecule type" value="mRNA"/>
</dbReference>
<dbReference type="ArachnoServer" id="AS000984">
    <property type="toxin name" value="U7-lycotoxin-Ls1a"/>
</dbReference>
<dbReference type="GO" id="GO:0005576">
    <property type="term" value="C:extracellular region"/>
    <property type="evidence" value="ECO:0007669"/>
    <property type="project" value="UniProtKB-SubCell"/>
</dbReference>
<dbReference type="GO" id="GO:0090729">
    <property type="term" value="F:toxin activity"/>
    <property type="evidence" value="ECO:0007669"/>
    <property type="project" value="UniProtKB-KW"/>
</dbReference>
<dbReference type="InterPro" id="IPR019553">
    <property type="entry name" value="Spider_toxin_CSTX_knottin"/>
</dbReference>
<dbReference type="Pfam" id="PF10530">
    <property type="entry name" value="Toxin_35"/>
    <property type="match status" value="1"/>
</dbReference>
<name>TX701_LYCSI</name>
<organism>
    <name type="scientific">Lycosa singoriensis</name>
    <name type="common">Wolf spider</name>
    <name type="synonym">Aranea singoriensis</name>
    <dbReference type="NCBI Taxonomy" id="434756"/>
    <lineage>
        <taxon>Eukaryota</taxon>
        <taxon>Metazoa</taxon>
        <taxon>Ecdysozoa</taxon>
        <taxon>Arthropoda</taxon>
        <taxon>Chelicerata</taxon>
        <taxon>Arachnida</taxon>
        <taxon>Araneae</taxon>
        <taxon>Araneomorphae</taxon>
        <taxon>Entelegynae</taxon>
        <taxon>Lycosoidea</taxon>
        <taxon>Lycosidae</taxon>
        <taxon>Lycosa</taxon>
    </lineage>
</organism>
<evidence type="ECO:0000250" key="1"/>
<evidence type="ECO:0000255" key="2"/>
<evidence type="ECO:0000305" key="3"/>
<sequence>MKLIIFTGLALLLIVSLIDVEAQNEGACLPRGSVCTTNHAGCCSKLSCDCYRRFEKGVEKGQKCWCIPTGLRYSKEKE</sequence>
<comment type="subcellular location">
    <subcellularLocation>
        <location evidence="1">Secreted</location>
    </subcellularLocation>
</comment>
<comment type="tissue specificity">
    <text>Expressed by the venom gland.</text>
</comment>
<comment type="PTM">
    <text evidence="1">Contains 4 disulfide bonds.</text>
</comment>
<comment type="similarity">
    <text evidence="3">Belongs to the neurotoxin 19 (CSTX) family. 07 (U7-Lctx) subfamily.</text>
</comment>
<reference key="1">
    <citation type="journal article" date="2010" name="Zoology">
        <title>Transcriptome analysis of the venom glands of the Chinese wolf spider Lycosa singoriensis.</title>
        <authorList>
            <person name="Zhang Y."/>
            <person name="Chen J."/>
            <person name="Tang X."/>
            <person name="Wang F."/>
            <person name="Jiang L."/>
            <person name="Xiong X."/>
            <person name="Wang M."/>
            <person name="Rong M."/>
            <person name="Liu Z."/>
            <person name="Liang S."/>
        </authorList>
    </citation>
    <scope>NUCLEOTIDE SEQUENCE [LARGE SCALE MRNA]</scope>
    <source>
        <tissue>Venom gland</tissue>
    </source>
</reference>
<keyword id="KW-1015">Disulfide bond</keyword>
<keyword id="KW-0964">Secreted</keyword>
<keyword id="KW-0732">Signal</keyword>
<keyword id="KW-0800">Toxin</keyword>
<protein>
    <recommendedName>
        <fullName>U7-lycotoxin-Ls1a</fullName>
    </recommendedName>
    <alternativeName>
        <fullName>Toxin-like structure LSTX-G1</fullName>
    </alternativeName>
</protein>
<accession>B6DCW1</accession>
<proteinExistence type="evidence at transcript level"/>